<protein>
    <recommendedName>
        <fullName evidence="1">Protein DsrB</fullName>
    </recommendedName>
</protein>
<gene>
    <name evidence="1" type="primary">dsrB</name>
    <name type="ordered locus">ECDH10B_2094</name>
</gene>
<name>DSRB_ECODH</name>
<dbReference type="EMBL" id="CP000948">
    <property type="protein sequence ID" value="ACB03138.1"/>
    <property type="molecule type" value="Genomic_DNA"/>
</dbReference>
<dbReference type="RefSeq" id="WP_000867217.1">
    <property type="nucleotide sequence ID" value="NC_010473.1"/>
</dbReference>
<dbReference type="SMR" id="B1X6A6"/>
<dbReference type="GeneID" id="93775233"/>
<dbReference type="KEGG" id="ecd:ECDH10B_2094"/>
<dbReference type="HOGENOM" id="CLU_189289_0_0_6"/>
<dbReference type="HAMAP" id="MF_01549">
    <property type="entry name" value="DsrB"/>
    <property type="match status" value="1"/>
</dbReference>
<dbReference type="InterPro" id="IPR019717">
    <property type="entry name" value="Dextransucrase_DSRB"/>
</dbReference>
<dbReference type="NCBIfam" id="NF007981">
    <property type="entry name" value="PRK10708.1"/>
    <property type="match status" value="1"/>
</dbReference>
<dbReference type="Pfam" id="PF10781">
    <property type="entry name" value="DSRB"/>
    <property type="match status" value="1"/>
</dbReference>
<sequence length="62" mass="6946">MKVNDRVTVKTDGGPRRPGVVLAVEEFSEGTMYLVSLEDYPLGIWFFNEAGHQDGIFVEKAE</sequence>
<evidence type="ECO:0000255" key="1">
    <source>
        <dbReference type="HAMAP-Rule" id="MF_01549"/>
    </source>
</evidence>
<comment type="similarity">
    <text evidence="1">Belongs to the DsrB family.</text>
</comment>
<reference key="1">
    <citation type="journal article" date="2008" name="J. Bacteriol.">
        <title>The complete genome sequence of Escherichia coli DH10B: insights into the biology of a laboratory workhorse.</title>
        <authorList>
            <person name="Durfee T."/>
            <person name="Nelson R."/>
            <person name="Baldwin S."/>
            <person name="Plunkett G. III"/>
            <person name="Burland V."/>
            <person name="Mau B."/>
            <person name="Petrosino J.F."/>
            <person name="Qin X."/>
            <person name="Muzny D.M."/>
            <person name="Ayele M."/>
            <person name="Gibbs R.A."/>
            <person name="Csorgo B."/>
            <person name="Posfai G."/>
            <person name="Weinstock G.M."/>
            <person name="Blattner F.R."/>
        </authorList>
    </citation>
    <scope>NUCLEOTIDE SEQUENCE [LARGE SCALE GENOMIC DNA]</scope>
    <source>
        <strain>K12 / DH10B</strain>
    </source>
</reference>
<feature type="chain" id="PRO_1000189830" description="Protein DsrB">
    <location>
        <begin position="1"/>
        <end position="62"/>
    </location>
</feature>
<organism>
    <name type="scientific">Escherichia coli (strain K12 / DH10B)</name>
    <dbReference type="NCBI Taxonomy" id="316385"/>
    <lineage>
        <taxon>Bacteria</taxon>
        <taxon>Pseudomonadati</taxon>
        <taxon>Pseudomonadota</taxon>
        <taxon>Gammaproteobacteria</taxon>
        <taxon>Enterobacterales</taxon>
        <taxon>Enterobacteriaceae</taxon>
        <taxon>Escherichia</taxon>
    </lineage>
</organism>
<accession>B1X6A6</accession>
<proteinExistence type="inferred from homology"/>